<name>RS4_RUMCH</name>
<gene>
    <name evidence="1" type="primary">rpsD</name>
    <name type="ordered locus">Ccel_0786</name>
</gene>
<sequence>MARYTDASCRLCRREGEKLFLKGERCYTDKCSVARRPYAPGQHGQGRKKMSEYGIQLREKAKVRRFYGVLEGQFSKYFEVASRRKGITGENLLQILETRLDNVVYRLGLGTSRPESRQLVTHGHFTVNGKRVNIPSYLIKVGDVIAVADNSKNSPKVKSIREIAGGKVIPKWLEFDEENLVGKVVALPAREDIDLPIKEHLIVELYSK</sequence>
<dbReference type="EMBL" id="CP001348">
    <property type="protein sequence ID" value="ACL75164.1"/>
    <property type="molecule type" value="Genomic_DNA"/>
</dbReference>
<dbReference type="RefSeq" id="WP_015924326.1">
    <property type="nucleotide sequence ID" value="NC_011898.1"/>
</dbReference>
<dbReference type="SMR" id="B8I807"/>
<dbReference type="STRING" id="394503.Ccel_0786"/>
<dbReference type="KEGG" id="cce:Ccel_0786"/>
<dbReference type="eggNOG" id="COG0522">
    <property type="taxonomic scope" value="Bacteria"/>
</dbReference>
<dbReference type="HOGENOM" id="CLU_092403_0_2_9"/>
<dbReference type="OrthoDB" id="9803672at2"/>
<dbReference type="Proteomes" id="UP000001349">
    <property type="component" value="Chromosome"/>
</dbReference>
<dbReference type="GO" id="GO:0015935">
    <property type="term" value="C:small ribosomal subunit"/>
    <property type="evidence" value="ECO:0007669"/>
    <property type="project" value="InterPro"/>
</dbReference>
<dbReference type="GO" id="GO:0019843">
    <property type="term" value="F:rRNA binding"/>
    <property type="evidence" value="ECO:0007669"/>
    <property type="project" value="UniProtKB-UniRule"/>
</dbReference>
<dbReference type="GO" id="GO:0003735">
    <property type="term" value="F:structural constituent of ribosome"/>
    <property type="evidence" value="ECO:0007669"/>
    <property type="project" value="InterPro"/>
</dbReference>
<dbReference type="GO" id="GO:0042274">
    <property type="term" value="P:ribosomal small subunit biogenesis"/>
    <property type="evidence" value="ECO:0007669"/>
    <property type="project" value="TreeGrafter"/>
</dbReference>
<dbReference type="GO" id="GO:0006412">
    <property type="term" value="P:translation"/>
    <property type="evidence" value="ECO:0007669"/>
    <property type="project" value="UniProtKB-UniRule"/>
</dbReference>
<dbReference type="CDD" id="cd00165">
    <property type="entry name" value="S4"/>
    <property type="match status" value="1"/>
</dbReference>
<dbReference type="FunFam" id="1.10.1050.10:FF:000001">
    <property type="entry name" value="30S ribosomal protein S4"/>
    <property type="match status" value="1"/>
</dbReference>
<dbReference type="FunFam" id="3.10.290.10:FF:000001">
    <property type="entry name" value="30S ribosomal protein S4"/>
    <property type="match status" value="1"/>
</dbReference>
<dbReference type="Gene3D" id="1.10.1050.10">
    <property type="entry name" value="Ribosomal Protein S4 Delta 41, Chain A, domain 1"/>
    <property type="match status" value="1"/>
</dbReference>
<dbReference type="Gene3D" id="3.10.290.10">
    <property type="entry name" value="RNA-binding S4 domain"/>
    <property type="match status" value="1"/>
</dbReference>
<dbReference type="HAMAP" id="MF_01306_B">
    <property type="entry name" value="Ribosomal_uS4_B"/>
    <property type="match status" value="1"/>
</dbReference>
<dbReference type="InterPro" id="IPR022801">
    <property type="entry name" value="Ribosomal_uS4"/>
</dbReference>
<dbReference type="InterPro" id="IPR005709">
    <property type="entry name" value="Ribosomal_uS4_bac-type"/>
</dbReference>
<dbReference type="InterPro" id="IPR018079">
    <property type="entry name" value="Ribosomal_uS4_CS"/>
</dbReference>
<dbReference type="InterPro" id="IPR001912">
    <property type="entry name" value="Ribosomal_uS4_N"/>
</dbReference>
<dbReference type="InterPro" id="IPR002942">
    <property type="entry name" value="S4_RNA-bd"/>
</dbReference>
<dbReference type="InterPro" id="IPR036986">
    <property type="entry name" value="S4_RNA-bd_sf"/>
</dbReference>
<dbReference type="NCBIfam" id="NF003717">
    <property type="entry name" value="PRK05327.1"/>
    <property type="match status" value="1"/>
</dbReference>
<dbReference type="NCBIfam" id="TIGR01017">
    <property type="entry name" value="rpsD_bact"/>
    <property type="match status" value="1"/>
</dbReference>
<dbReference type="PANTHER" id="PTHR11831">
    <property type="entry name" value="30S 40S RIBOSOMAL PROTEIN"/>
    <property type="match status" value="1"/>
</dbReference>
<dbReference type="PANTHER" id="PTHR11831:SF4">
    <property type="entry name" value="SMALL RIBOSOMAL SUBUNIT PROTEIN US4M"/>
    <property type="match status" value="1"/>
</dbReference>
<dbReference type="Pfam" id="PF00163">
    <property type="entry name" value="Ribosomal_S4"/>
    <property type="match status" value="1"/>
</dbReference>
<dbReference type="Pfam" id="PF01479">
    <property type="entry name" value="S4"/>
    <property type="match status" value="1"/>
</dbReference>
<dbReference type="SMART" id="SM01390">
    <property type="entry name" value="Ribosomal_S4"/>
    <property type="match status" value="1"/>
</dbReference>
<dbReference type="SMART" id="SM00363">
    <property type="entry name" value="S4"/>
    <property type="match status" value="1"/>
</dbReference>
<dbReference type="SUPFAM" id="SSF55174">
    <property type="entry name" value="Alpha-L RNA-binding motif"/>
    <property type="match status" value="1"/>
</dbReference>
<dbReference type="PROSITE" id="PS00632">
    <property type="entry name" value="RIBOSOMAL_S4"/>
    <property type="match status" value="1"/>
</dbReference>
<dbReference type="PROSITE" id="PS50889">
    <property type="entry name" value="S4"/>
    <property type="match status" value="1"/>
</dbReference>
<comment type="function">
    <text evidence="1">One of the primary rRNA binding proteins, it binds directly to 16S rRNA where it nucleates assembly of the body of the 30S subunit.</text>
</comment>
<comment type="function">
    <text evidence="1">With S5 and S12 plays an important role in translational accuracy.</text>
</comment>
<comment type="subunit">
    <text evidence="1">Part of the 30S ribosomal subunit. Contacts protein S5. The interaction surface between S4 and S5 is involved in control of translational fidelity.</text>
</comment>
<comment type="similarity">
    <text evidence="1">Belongs to the universal ribosomal protein uS4 family.</text>
</comment>
<proteinExistence type="inferred from homology"/>
<accession>B8I807</accession>
<reference key="1">
    <citation type="submission" date="2009-01" db="EMBL/GenBank/DDBJ databases">
        <title>Complete sequence of Clostridium cellulolyticum H10.</title>
        <authorList>
            <consortium name="US DOE Joint Genome Institute"/>
            <person name="Lucas S."/>
            <person name="Copeland A."/>
            <person name="Lapidus A."/>
            <person name="Glavina del Rio T."/>
            <person name="Dalin E."/>
            <person name="Tice H."/>
            <person name="Bruce D."/>
            <person name="Goodwin L."/>
            <person name="Pitluck S."/>
            <person name="Chertkov O."/>
            <person name="Saunders E."/>
            <person name="Brettin T."/>
            <person name="Detter J.C."/>
            <person name="Han C."/>
            <person name="Larimer F."/>
            <person name="Land M."/>
            <person name="Hauser L."/>
            <person name="Kyrpides N."/>
            <person name="Ivanova N."/>
            <person name="Zhou J."/>
            <person name="Richardson P."/>
        </authorList>
    </citation>
    <scope>NUCLEOTIDE SEQUENCE [LARGE SCALE GENOMIC DNA]</scope>
    <source>
        <strain>ATCC 35319 / DSM 5812 / JCM 6584 / H10</strain>
    </source>
</reference>
<feature type="chain" id="PRO_1000165394" description="Small ribosomal subunit protein uS4">
    <location>
        <begin position="1"/>
        <end position="208"/>
    </location>
</feature>
<feature type="domain" description="S4 RNA-binding" evidence="1">
    <location>
        <begin position="98"/>
        <end position="164"/>
    </location>
</feature>
<protein>
    <recommendedName>
        <fullName evidence="1">Small ribosomal subunit protein uS4</fullName>
    </recommendedName>
    <alternativeName>
        <fullName evidence="2">30S ribosomal protein S4</fullName>
    </alternativeName>
</protein>
<keyword id="KW-1185">Reference proteome</keyword>
<keyword id="KW-0687">Ribonucleoprotein</keyword>
<keyword id="KW-0689">Ribosomal protein</keyword>
<keyword id="KW-0694">RNA-binding</keyword>
<keyword id="KW-0699">rRNA-binding</keyword>
<organism>
    <name type="scientific">Ruminiclostridium cellulolyticum (strain ATCC 35319 / DSM 5812 / JCM 6584 / H10)</name>
    <name type="common">Clostridium cellulolyticum</name>
    <dbReference type="NCBI Taxonomy" id="394503"/>
    <lineage>
        <taxon>Bacteria</taxon>
        <taxon>Bacillati</taxon>
        <taxon>Bacillota</taxon>
        <taxon>Clostridia</taxon>
        <taxon>Eubacteriales</taxon>
        <taxon>Oscillospiraceae</taxon>
        <taxon>Ruminiclostridium</taxon>
    </lineage>
</organism>
<evidence type="ECO:0000255" key="1">
    <source>
        <dbReference type="HAMAP-Rule" id="MF_01306"/>
    </source>
</evidence>
<evidence type="ECO:0000305" key="2"/>